<keyword id="KW-0106">Calcium</keyword>
<keyword id="KW-0963">Cytoplasm</keyword>
<keyword id="KW-0275">Fatty acid biosynthesis</keyword>
<keyword id="KW-0276">Fatty acid metabolism</keyword>
<keyword id="KW-0319">Glycerol metabolism</keyword>
<keyword id="KW-0333">Golgi apparatus</keyword>
<keyword id="KW-0378">Hydrolase</keyword>
<keyword id="KW-1017">Isopeptide bond</keyword>
<keyword id="KW-0434">Leukotriene biosynthesis</keyword>
<keyword id="KW-0444">Lipid biosynthesis</keyword>
<keyword id="KW-0442">Lipid degradation</keyword>
<keyword id="KW-0443">Lipid metabolism</keyword>
<keyword id="KW-0446">Lipid-binding</keyword>
<keyword id="KW-0472">Membrane</keyword>
<keyword id="KW-0479">Metal-binding</keyword>
<keyword id="KW-0539">Nucleus</keyword>
<keyword id="KW-0595">Phospholipid degradation</keyword>
<keyword id="KW-1208">Phospholipid metabolism</keyword>
<keyword id="KW-0597">Phosphoprotein</keyword>
<keyword id="KW-0643">Prostaglandin biosynthesis</keyword>
<keyword id="KW-0644">Prostaglandin metabolism</keyword>
<keyword id="KW-1185">Reference proteome</keyword>
<keyword id="KW-0832">Ubl conjugation</keyword>
<evidence type="ECO:0000250" key="1"/>
<evidence type="ECO:0000250" key="2">
    <source>
        <dbReference type="UniProtKB" id="P47712"/>
    </source>
</evidence>
<evidence type="ECO:0000250" key="3">
    <source>
        <dbReference type="UniProtKB" id="P47713"/>
    </source>
</evidence>
<evidence type="ECO:0000250" key="4">
    <source>
        <dbReference type="UniProtKB" id="P50393"/>
    </source>
</evidence>
<evidence type="ECO:0000255" key="5">
    <source>
        <dbReference type="PROSITE-ProRule" id="PRU00041"/>
    </source>
</evidence>
<evidence type="ECO:0000255" key="6">
    <source>
        <dbReference type="PROSITE-ProRule" id="PRU00555"/>
    </source>
</evidence>
<evidence type="ECO:0000256" key="7">
    <source>
        <dbReference type="SAM" id="MobiDB-lite"/>
    </source>
</evidence>
<gene>
    <name type="primary">PLA2G4A</name>
    <name type="synonym">CPLA2</name>
    <name type="synonym">PLA2G4</name>
</gene>
<proteinExistence type="evidence at transcript level"/>
<feature type="chain" id="PRO_0000345135" description="Cytosolic phospholipase A2">
    <location>
        <begin position="1"/>
        <end position="748"/>
    </location>
</feature>
<feature type="domain" description="C2" evidence="5">
    <location>
        <begin position="6"/>
        <end position="122"/>
    </location>
</feature>
<feature type="domain" description="PLA2c" evidence="6">
    <location>
        <begin position="138"/>
        <end position="739"/>
    </location>
</feature>
<feature type="region of interest" description="Phospholipid binding" evidence="1">
    <location>
        <begin position="1"/>
        <end position="178"/>
    </location>
</feature>
<feature type="region of interest" description="Disordered" evidence="7">
    <location>
        <begin position="428"/>
        <end position="458"/>
    </location>
</feature>
<feature type="compositionally biased region" description="Basic and acidic residues" evidence="7">
    <location>
        <begin position="442"/>
        <end position="458"/>
    </location>
</feature>
<feature type="active site" description="Nucleophile" evidence="1">
    <location>
        <position position="228"/>
    </location>
</feature>
<feature type="active site" description="Proton acceptor" evidence="1">
    <location>
        <position position="548"/>
    </location>
</feature>
<feature type="binding site" evidence="1">
    <location>
        <position position="40"/>
    </location>
    <ligand>
        <name>Ca(2+)</name>
        <dbReference type="ChEBI" id="CHEBI:29108"/>
        <label>1</label>
    </ligand>
</feature>
<feature type="binding site" evidence="1">
    <location>
        <position position="40"/>
    </location>
    <ligand>
        <name>Ca(2+)</name>
        <dbReference type="ChEBI" id="CHEBI:29108"/>
        <label>2</label>
    </ligand>
</feature>
<feature type="binding site" evidence="1">
    <location>
        <position position="41"/>
    </location>
    <ligand>
        <name>Ca(2+)</name>
        <dbReference type="ChEBI" id="CHEBI:29108"/>
        <label>1</label>
    </ligand>
</feature>
<feature type="binding site" evidence="1">
    <location>
        <position position="43"/>
    </location>
    <ligand>
        <name>Ca(2+)</name>
        <dbReference type="ChEBI" id="CHEBI:29108"/>
        <label>1</label>
    </ligand>
</feature>
<feature type="binding site" evidence="1">
    <location>
        <position position="43"/>
    </location>
    <ligand>
        <name>Ca(2+)</name>
        <dbReference type="ChEBI" id="CHEBI:29108"/>
        <label>2</label>
    </ligand>
</feature>
<feature type="binding site" evidence="1">
    <location>
        <position position="65"/>
    </location>
    <ligand>
        <name>Ca(2+)</name>
        <dbReference type="ChEBI" id="CHEBI:29108"/>
        <label>1</label>
    </ligand>
</feature>
<feature type="binding site" evidence="1">
    <location>
        <position position="93"/>
    </location>
    <ligand>
        <name>Ca(2+)</name>
        <dbReference type="ChEBI" id="CHEBI:29108"/>
        <label>2</label>
    </ligand>
</feature>
<feature type="binding site" evidence="1">
    <location>
        <position position="94"/>
    </location>
    <ligand>
        <name>Ca(2+)</name>
        <dbReference type="ChEBI" id="CHEBI:29108"/>
        <label>2</label>
    </ligand>
</feature>
<feature type="binding site" evidence="1">
    <location>
        <position position="95"/>
    </location>
    <ligand>
        <name>Ca(2+)</name>
        <dbReference type="ChEBI" id="CHEBI:29108"/>
        <label>2</label>
    </ligand>
</feature>
<feature type="modified residue" description="Phosphoserine" evidence="2">
    <location>
        <position position="2"/>
    </location>
</feature>
<feature type="modified residue" description="Phosphothreonine" evidence="2">
    <location>
        <position position="268"/>
    </location>
</feature>
<feature type="modified residue" description="Phosphoserine" evidence="4">
    <location>
        <position position="434"/>
    </location>
</feature>
<feature type="modified residue" description="Phosphoserine" evidence="2">
    <location>
        <position position="435"/>
    </location>
</feature>
<feature type="modified residue" description="Phosphoserine" evidence="2">
    <location>
        <position position="437"/>
    </location>
</feature>
<feature type="modified residue" description="Phosphoserine; by MAPK" evidence="2">
    <location>
        <position position="505"/>
    </location>
</feature>
<feature type="modified residue" description="Phosphoserine" evidence="4">
    <location>
        <position position="514"/>
    </location>
</feature>
<feature type="modified residue" description="Phosphoserine" evidence="2">
    <location>
        <position position="726"/>
    </location>
</feature>
<feature type="modified residue" description="Phosphoserine" evidence="2">
    <location>
        <position position="728"/>
    </location>
</feature>
<feature type="cross-link" description="Glycyl lysine isopeptide (Lys-Gly) (interchain with G-Cter in SUMO2)" evidence="2">
    <location>
        <position position="540"/>
    </location>
</feature>
<feature type="cross-link" description="Glycyl lysine isopeptide (Lys-Gly) (interchain with G-Cter in SUMO2)" evidence="2">
    <location>
        <position position="605"/>
    </location>
</feature>
<reference key="1">
    <citation type="submission" date="1999-11" db="EMBL/GenBank/DDBJ databases">
        <title>Molecular cloning of cDNA coding for phospholipase A2.</title>
        <authorList>
            <person name="Al-Khalili O.K."/>
            <person name="Eaton D.C."/>
        </authorList>
    </citation>
    <scope>NUCLEOTIDE SEQUENCE [MRNA]</scope>
    <source>
        <strain>New Zealand white</strain>
        <tissue>Heart</tissue>
    </source>
</reference>
<protein>
    <recommendedName>
        <fullName>Cytosolic phospholipase A2</fullName>
        <shortName>cPLA2</shortName>
    </recommendedName>
    <alternativeName>
        <fullName>Phospholipase A2 group IVA</fullName>
    </alternativeName>
    <domain>
        <recommendedName>
            <fullName>Phospholipase A2</fullName>
            <ecNumber evidence="2">3.1.1.4</ecNumber>
        </recommendedName>
        <alternativeName>
            <fullName>Phosphatidylcholine 2-acylhydrolase</fullName>
        </alternativeName>
    </domain>
    <domain>
        <recommendedName>
            <fullName>Lysophospholipase</fullName>
            <ecNumber evidence="2">3.1.1.5</ecNumber>
        </recommendedName>
    </domain>
</protein>
<accession>Q9TT38</accession>
<sequence length="748" mass="85235">MSFIDPYQHIIVEHQYSHKFTVVVLRATKVTKGAFGDMLDTPDPYVELFIATTPDSRKRTRHFNNDINPVWNEAFEFILDPNQGNVLEITLMDANYVMDETLGTATFPVSSMKVGEKKEVPFIFNQVTEMILEMSLEVCSSPDLRFSMALCDQEKAFRQQRKENIKENMRKLLGPKKSEGLYSTRDVPVVAILGSGGGFRAMVGFSGVMKALYESGILDCATYIAGLSGSTWYMSTLYSHPDFPEKGPQEINEELMKNVSHNPLLLLTPQKVKRYVESLWKKKSSGQPVTFTDIFGMLIGETLIHNRMHTTLSSLKEKVSSAQCPLPLFTCLHVKPDVSELMFADWVEFSPYEIGMAKYGTFMAPDLFGSKFFMGTVVKKYEENPLHFLMGVWGSAFSILFNRVLGVSGSHNKGSTMEEELENITAKHIVSNDSSDSDDESQEPKGTEGEDAEREYQNDHQASWVHRMLMALVSDSALFNTREGRAGKVHNFMLGLNLNTSYPLSPLRDFTQESFDDDELDAAVADPDEFERIYEPLDVKSKKIHVVDSGLTFNLPYPLILRPQRGVDLIISFDFSARPSDTSPPFKELLLAEKWAKMNKLPFPKIDPYVFDREGLKECYVFKPKNPDVEKDCPIIIHFVLANINFRKYKSPGVPRETKEEKEIADFDIFDDPESPFSTFNFQYPNQAFKRLHDLMYFNTLNNIDVIKDAMVESIEYRRQNPSRCSVSLSNVEARRFFNKEFLSKPTA</sequence>
<name>PA24A_RABIT</name>
<comment type="function">
    <text evidence="2 3">Has primarily calcium-dependent phospholipase and lysophospholipase activities, with a major role in membrane lipid remodeling and biosynthesis of lipid mediators of the inflammatory response (By similarity). Plays an important role in embryo implantation and parturition through its ability to trigger prostanoid production (By similarity). Preferentially hydrolyzes the ester bond of the fatty acyl group attached at sn-2 position of phospholipids (phospholipase A2 activity). Selectively hydrolyzes sn-2 arachidonoyl group from membrane phospholipids, providing the precursor for eicosanoid biosynthesis via the cyclooxygenase pathway. In an alternative pathway of eicosanoid biosynthesis, hydrolyzes sn-2 fatty acyl chain of eicosanoid lysophopholipids to release free bioactive eicosanoids. Hydrolyzes the ester bond of the fatty acyl group attached at sn-1 position of phospholipids (phospholipase A1 activity) only if an ether linkage rather than an ester linkage is present at the sn-2 position. This hydrolysis is not stereospecific. Has calcium-independent phospholipase A2 and lysophospholipase activities in the presence of phosphoinositides. Has O-acyltransferase activity. Catalyzes the transfer of fatty acyl chains from phospholipids to a primary hydroxyl group of glycerol (sn-1 or sn-3), potentially contributing to monoacylglycerol synthesis (By similarity).</text>
</comment>
<comment type="catalytic activity">
    <reaction evidence="2">
        <text>a 1,2-diacyl-sn-glycero-3-phosphocholine + H2O = a 1-acyl-sn-glycero-3-phosphocholine + a fatty acid + H(+)</text>
        <dbReference type="Rhea" id="RHEA:15801"/>
        <dbReference type="ChEBI" id="CHEBI:15377"/>
        <dbReference type="ChEBI" id="CHEBI:15378"/>
        <dbReference type="ChEBI" id="CHEBI:28868"/>
        <dbReference type="ChEBI" id="CHEBI:57643"/>
        <dbReference type="ChEBI" id="CHEBI:58168"/>
        <dbReference type="EC" id="3.1.1.4"/>
    </reaction>
    <physiologicalReaction direction="left-to-right" evidence="2">
        <dbReference type="Rhea" id="RHEA:15802"/>
    </physiologicalReaction>
</comment>
<comment type="catalytic activity">
    <reaction evidence="2">
        <text>a 1-O-alkyl-2-acyl-sn-glycero-3-phosphocholine + H2O = a 1-O-alkyl-sn-glycero-3-phosphocholine + a fatty acid + H(+)</text>
        <dbReference type="Rhea" id="RHEA:36231"/>
        <dbReference type="ChEBI" id="CHEBI:15377"/>
        <dbReference type="ChEBI" id="CHEBI:15378"/>
        <dbReference type="ChEBI" id="CHEBI:28868"/>
        <dbReference type="ChEBI" id="CHEBI:30909"/>
        <dbReference type="ChEBI" id="CHEBI:36702"/>
        <dbReference type="EC" id="3.1.1.4"/>
    </reaction>
    <physiologicalReaction direction="left-to-right" evidence="2">
        <dbReference type="Rhea" id="RHEA:36232"/>
    </physiologicalReaction>
</comment>
<comment type="catalytic activity">
    <reaction evidence="2">
        <text>a 1-acyl-sn-glycero-3-phosphocholine + H2O = sn-glycerol 3-phosphocholine + a fatty acid + H(+)</text>
        <dbReference type="Rhea" id="RHEA:15177"/>
        <dbReference type="ChEBI" id="CHEBI:15377"/>
        <dbReference type="ChEBI" id="CHEBI:15378"/>
        <dbReference type="ChEBI" id="CHEBI:16870"/>
        <dbReference type="ChEBI" id="CHEBI:28868"/>
        <dbReference type="ChEBI" id="CHEBI:58168"/>
        <dbReference type="EC" id="3.1.1.5"/>
    </reaction>
    <physiologicalReaction direction="left-to-right" evidence="2">
        <dbReference type="Rhea" id="RHEA:15178"/>
    </physiologicalReaction>
</comment>
<comment type="catalytic activity">
    <reaction evidence="2">
        <text>1-hexadecanoyl-2-(5Z,8Z,11Z,14Z-eicosatetraenoyl)-sn-glycero-3-phosphocholine + H2O = 1-hexadecanoyl-sn-glycero-3-phosphocholine + (5Z,8Z,11Z,14Z)-eicosatetraenoate + H(+)</text>
        <dbReference type="Rhea" id="RHEA:40427"/>
        <dbReference type="ChEBI" id="CHEBI:15377"/>
        <dbReference type="ChEBI" id="CHEBI:15378"/>
        <dbReference type="ChEBI" id="CHEBI:32395"/>
        <dbReference type="ChEBI" id="CHEBI:72998"/>
        <dbReference type="ChEBI" id="CHEBI:73003"/>
    </reaction>
    <physiologicalReaction direction="left-to-right" evidence="2">
        <dbReference type="Rhea" id="RHEA:40428"/>
    </physiologicalReaction>
</comment>
<comment type="catalytic activity">
    <reaction evidence="2">
        <text>1,2-di-(5Z,8Z,11Z,14Z-eicosatetraenoyl)-sn-glycero-3-phosphocholine + H2O = 1-(5Z,8Z,11Z,14Z-eicosatetraenoyl)-sn-glycero-3-phosphocholine + (5Z,8Z,11Z,14Z)-eicosatetraenoate + H(+)</text>
        <dbReference type="Rhea" id="RHEA:41075"/>
        <dbReference type="ChEBI" id="CHEBI:15377"/>
        <dbReference type="ChEBI" id="CHEBI:15378"/>
        <dbReference type="ChEBI" id="CHEBI:32395"/>
        <dbReference type="ChEBI" id="CHEBI:60657"/>
        <dbReference type="ChEBI" id="CHEBI:74344"/>
    </reaction>
    <physiologicalReaction direction="left-to-right" evidence="2">
        <dbReference type="Rhea" id="RHEA:41076"/>
    </physiologicalReaction>
</comment>
<comment type="catalytic activity">
    <reaction evidence="2">
        <text>1-octadecanoyl-2-(5Z,8Z,11Z,14Z-eicosatetraenoyl)-sn-glycero-3-phosphocholine + H2O = 1-octadecanoyl-sn-glycero-3-phosphocholine + (5Z,8Z,11Z,14Z)-eicosatetraenoate + H(+)</text>
        <dbReference type="Rhea" id="RHEA:40519"/>
        <dbReference type="ChEBI" id="CHEBI:15377"/>
        <dbReference type="ChEBI" id="CHEBI:15378"/>
        <dbReference type="ChEBI" id="CHEBI:32395"/>
        <dbReference type="ChEBI" id="CHEBI:73858"/>
        <dbReference type="ChEBI" id="CHEBI:74965"/>
    </reaction>
    <physiologicalReaction direction="left-to-right" evidence="2">
        <dbReference type="Rhea" id="RHEA:40520"/>
    </physiologicalReaction>
</comment>
<comment type="catalytic activity">
    <reaction evidence="2">
        <text>1-hexadecanoyl-2-(9Z,12Z-octadecadienoyl)-sn-glycero-3-phosphocholine + H2O = (9Z,12Z)-octadecadienoate + 1-hexadecanoyl-sn-glycero-3-phosphocholine + H(+)</text>
        <dbReference type="Rhea" id="RHEA:40811"/>
        <dbReference type="ChEBI" id="CHEBI:15377"/>
        <dbReference type="ChEBI" id="CHEBI:15378"/>
        <dbReference type="ChEBI" id="CHEBI:30245"/>
        <dbReference type="ChEBI" id="CHEBI:72998"/>
        <dbReference type="ChEBI" id="CHEBI:73002"/>
    </reaction>
    <physiologicalReaction direction="left-to-right" evidence="2">
        <dbReference type="Rhea" id="RHEA:40812"/>
    </physiologicalReaction>
</comment>
<comment type="catalytic activity">
    <reaction evidence="2">
        <text>1-octadecanoyl-2-(9Z,12Z,15Z-octadecatrienoyl)-sn-glycero-3-phosphocholine + H2O = (9Z,12Z,15Z)-octadecatrienoate + 1-octadecanoyl-sn-glycero-3-phosphocholine + H(+)</text>
        <dbReference type="Rhea" id="RHEA:41307"/>
        <dbReference type="ChEBI" id="CHEBI:15377"/>
        <dbReference type="ChEBI" id="CHEBI:15378"/>
        <dbReference type="ChEBI" id="CHEBI:32387"/>
        <dbReference type="ChEBI" id="CHEBI:73858"/>
        <dbReference type="ChEBI" id="CHEBI:78022"/>
    </reaction>
    <physiologicalReaction direction="left-to-right" evidence="2">
        <dbReference type="Rhea" id="RHEA:41308"/>
    </physiologicalReaction>
</comment>
<comment type="catalytic activity">
    <reaction evidence="2">
        <text>1-(5Z,8Z,11Z,14Z-eicosatetraenoyl)-2-hexadecanoyl-sn-glycero-3-phosphocholine + H2O = 1-(5Z,8Z,11Z,14Z-eicosatetraenoyl)-sn-glycero-3-phosphocholine + hexadecanoate + H(+)</text>
        <dbReference type="Rhea" id="RHEA:41071"/>
        <dbReference type="ChEBI" id="CHEBI:7896"/>
        <dbReference type="ChEBI" id="CHEBI:15377"/>
        <dbReference type="ChEBI" id="CHEBI:15378"/>
        <dbReference type="ChEBI" id="CHEBI:74344"/>
        <dbReference type="ChEBI" id="CHEBI:77694"/>
    </reaction>
    <physiologicalReaction direction="left-to-right" evidence="2">
        <dbReference type="Rhea" id="RHEA:41072"/>
    </physiologicalReaction>
</comment>
<comment type="catalytic activity">
    <reaction evidence="2">
        <text>1-O-hexadecyl-2-(5Z,8Z,11Z,14Z)-eicosatetraenoyl-sn-glycero-3-phosphocholine + H2O = 1-O-hexadecyl-sn-glycero-3-phosphocholine + (5Z,8Z,11Z,14Z)-eicosatetraenoate + H(+)</text>
        <dbReference type="Rhea" id="RHEA:41067"/>
        <dbReference type="ChEBI" id="CHEBI:15377"/>
        <dbReference type="ChEBI" id="CHEBI:15378"/>
        <dbReference type="ChEBI" id="CHEBI:32395"/>
        <dbReference type="ChEBI" id="CHEBI:55430"/>
        <dbReference type="ChEBI" id="CHEBI:64496"/>
    </reaction>
    <physiologicalReaction direction="left-to-right" evidence="2">
        <dbReference type="Rhea" id="RHEA:41068"/>
    </physiologicalReaction>
</comment>
<comment type="catalytic activity">
    <reaction evidence="2">
        <text>1,2-di-(9Z-octadecenoyl)-sn-glycero-3-phospho-(1'-sn-glycerol) + H2O = 1-(9Z-octadecenoyl)-sn-glycero-3-phospho-(1'-sn-glycerol) + (9Z)-octadecenoate + H(+)</text>
        <dbReference type="Rhea" id="RHEA:41123"/>
        <dbReference type="ChEBI" id="CHEBI:15377"/>
        <dbReference type="ChEBI" id="CHEBI:15378"/>
        <dbReference type="ChEBI" id="CHEBI:30823"/>
        <dbReference type="ChEBI" id="CHEBI:72828"/>
        <dbReference type="ChEBI" id="CHEBI:75163"/>
    </reaction>
    <physiologicalReaction direction="left-to-right" evidence="2">
        <dbReference type="Rhea" id="RHEA:41124"/>
    </physiologicalReaction>
</comment>
<comment type="catalytic activity">
    <reaction evidence="2">
        <text>1-octadecanoyl-2-(5Z,8Z,11Z,14Z-eicosatetraenoyl)-sn-glycero-3-phosphate + H2O = 1-octadecanoyl-sn-glycero-3-phosphate + (5Z,8Z,11Z,14Z)-eicosatetraenoate + H(+)</text>
        <dbReference type="Rhea" id="RHEA:40451"/>
        <dbReference type="ChEBI" id="CHEBI:15377"/>
        <dbReference type="ChEBI" id="CHEBI:15378"/>
        <dbReference type="ChEBI" id="CHEBI:32395"/>
        <dbReference type="ChEBI" id="CHEBI:74565"/>
        <dbReference type="ChEBI" id="CHEBI:77091"/>
    </reaction>
    <physiologicalReaction direction="left-to-right" evidence="2">
        <dbReference type="Rhea" id="RHEA:40452"/>
    </physiologicalReaction>
</comment>
<comment type="catalytic activity">
    <reaction evidence="2">
        <text>1-hexadecanoyl-sn-glycero-3-phosphocholine + H2O = sn-glycerol 3-phosphocholine + hexadecanoate + H(+)</text>
        <dbReference type="Rhea" id="RHEA:40435"/>
        <dbReference type="ChEBI" id="CHEBI:7896"/>
        <dbReference type="ChEBI" id="CHEBI:15377"/>
        <dbReference type="ChEBI" id="CHEBI:15378"/>
        <dbReference type="ChEBI" id="CHEBI:16870"/>
        <dbReference type="ChEBI" id="CHEBI:72998"/>
    </reaction>
    <physiologicalReaction direction="left-to-right" evidence="2">
        <dbReference type="Rhea" id="RHEA:40436"/>
    </physiologicalReaction>
</comment>
<comment type="catalytic activity">
    <reaction evidence="2">
        <text>2-(prostaglandin E2)-sn-glycero-3-phosphoethanolamine + H2O = sn-glycero-3-phosphoethanolamine + prostaglandin E2 + H(+)</text>
        <dbReference type="Rhea" id="RHEA:53704"/>
        <dbReference type="ChEBI" id="CHEBI:15377"/>
        <dbReference type="ChEBI" id="CHEBI:15378"/>
        <dbReference type="ChEBI" id="CHEBI:137581"/>
        <dbReference type="ChEBI" id="CHEBI:143890"/>
        <dbReference type="ChEBI" id="CHEBI:606564"/>
    </reaction>
    <physiologicalReaction direction="left-to-right" evidence="2">
        <dbReference type="Rhea" id="RHEA:53705"/>
    </physiologicalReaction>
</comment>
<comment type="catalytic activity">
    <reaction evidence="2">
        <text>2-[(15S)-hydroxy-(5Z,8Z,11Z,13E)-eicosatetraenoyl]-sn-glycero-3-phosphocholine + H2O = (15S)-hydroxy-(5Z,8Z,11Z,13E)-eicosatetraenoate + sn-glycerol 3-phosphocholine + H(+)</text>
        <dbReference type="Rhea" id="RHEA:53700"/>
        <dbReference type="ChEBI" id="CHEBI:15377"/>
        <dbReference type="ChEBI" id="CHEBI:15378"/>
        <dbReference type="ChEBI" id="CHEBI:16870"/>
        <dbReference type="ChEBI" id="CHEBI:57409"/>
        <dbReference type="ChEBI" id="CHEBI:137584"/>
    </reaction>
    <physiologicalReaction direction="left-to-right" evidence="2">
        <dbReference type="Rhea" id="RHEA:53701"/>
    </physiologicalReaction>
</comment>
<comment type="catalytic activity">
    <reaction evidence="2">
        <text>2-[(15R)-hydroxy-(5Z,8Z,11Z,13E)-eicosatetraenoyl]-sn-glycero-3-phosphocholine + H2O = (15R)-hydroxy-(5Z,8Z,11Z,13E)-eicosatetraenoate + sn-glycerol 3-phosphocholine + H(+)</text>
        <dbReference type="Rhea" id="RHEA:53696"/>
        <dbReference type="ChEBI" id="CHEBI:15377"/>
        <dbReference type="ChEBI" id="CHEBI:15378"/>
        <dbReference type="ChEBI" id="CHEBI:16870"/>
        <dbReference type="ChEBI" id="CHEBI:78837"/>
        <dbReference type="ChEBI" id="CHEBI:137583"/>
    </reaction>
    <physiologicalReaction direction="left-to-right" evidence="2">
        <dbReference type="Rhea" id="RHEA:53697"/>
    </physiologicalReaction>
</comment>
<comment type="catalytic activity">
    <reaction evidence="2">
        <text>2-(prostaglandin E2)-sn-glycero-3-phosphocholine + H2O = prostaglandin E2 + sn-glycerol 3-phosphocholine + H(+)</text>
        <dbReference type="Rhea" id="RHEA:53692"/>
        <dbReference type="ChEBI" id="CHEBI:15377"/>
        <dbReference type="ChEBI" id="CHEBI:15378"/>
        <dbReference type="ChEBI" id="CHEBI:16870"/>
        <dbReference type="ChEBI" id="CHEBI:137585"/>
        <dbReference type="ChEBI" id="CHEBI:606564"/>
    </reaction>
    <physiologicalReaction direction="left-to-right" evidence="2">
        <dbReference type="Rhea" id="RHEA:53693"/>
    </physiologicalReaction>
</comment>
<comment type="catalytic activity">
    <reaction evidence="2">
        <text>2-[(11R)-hydroxy-(5Z,8Z,12E,14Z)-eicosatetraenoyl]-sn-glycero-3-phosphocholine + H2O = (11R)-hydroxy-(5Z,8Z,12E,14Z)-eicosatetraenoate + sn-glycerol 3-phosphocholine + H(+)</text>
        <dbReference type="Rhea" id="RHEA:53688"/>
        <dbReference type="ChEBI" id="CHEBI:15377"/>
        <dbReference type="ChEBI" id="CHEBI:15378"/>
        <dbReference type="ChEBI" id="CHEBI:16870"/>
        <dbReference type="ChEBI" id="CHEBI:78836"/>
        <dbReference type="ChEBI" id="CHEBI:137582"/>
    </reaction>
    <physiologicalReaction direction="left-to-right" evidence="2">
        <dbReference type="Rhea" id="RHEA:53689"/>
    </physiologicalReaction>
</comment>
<comment type="catalytic activity">
    <reaction evidence="2">
        <text>1-(5Z,8Z,11Z,14Z-eicosatetraenoyl)-2-O-hexadecyl-sn-glycero-3-phosphocholine + H2O = 2-O-hexadecyl-sn-glycero-3-phosphocholine + (5Z,8Z,11Z,14Z)-eicosatetraenoate + H(+)</text>
        <dbReference type="Rhea" id="RHEA:41271"/>
        <dbReference type="ChEBI" id="CHEBI:15377"/>
        <dbReference type="ChEBI" id="CHEBI:15378"/>
        <dbReference type="ChEBI" id="CHEBI:32395"/>
        <dbReference type="ChEBI" id="CHEBI:77695"/>
        <dbReference type="ChEBI" id="CHEBI:77696"/>
    </reaction>
    <physiologicalReaction direction="left-to-right" evidence="2">
        <dbReference type="Rhea" id="RHEA:41272"/>
    </physiologicalReaction>
</comment>
<comment type="catalytic activity">
    <reaction evidence="2">
        <text>1-octadecanoyl-2-(5Z,8Z,11Z,14Z-eicosatetraenoyl)-sn-glycero-3-phosphocholine + glycerol = 1-(5Z,8Z,11Z,14Z-eicosatetraenoyl)-glycerol + 1-octadecanoyl-sn-glycero-3-phosphocholine</text>
        <dbReference type="Rhea" id="RHEA:41099"/>
        <dbReference type="ChEBI" id="CHEBI:17754"/>
        <dbReference type="ChEBI" id="CHEBI:73858"/>
        <dbReference type="ChEBI" id="CHEBI:74965"/>
        <dbReference type="ChEBI" id="CHEBI:75612"/>
    </reaction>
    <physiologicalReaction direction="left-to-right" evidence="2">
        <dbReference type="Rhea" id="RHEA:41100"/>
    </physiologicalReaction>
</comment>
<comment type="catalytic activity">
    <reaction evidence="2">
        <text>1-octadecanoyl-2-(9Z,12Z,15Z-octadecatrienoyl)-sn-glycero-3-phosphocholine + glycerol = 1-(9Z,12Z,15Z-octadecatrienoyl)-glycerol + 1-octadecanoyl-sn-glycero-3-phosphocholine</text>
        <dbReference type="Rhea" id="RHEA:41087"/>
        <dbReference type="ChEBI" id="CHEBI:17754"/>
        <dbReference type="ChEBI" id="CHEBI:73858"/>
        <dbReference type="ChEBI" id="CHEBI:75610"/>
        <dbReference type="ChEBI" id="CHEBI:78022"/>
    </reaction>
    <physiologicalReaction direction="left-to-right" evidence="2">
        <dbReference type="Rhea" id="RHEA:41088"/>
    </physiologicalReaction>
</comment>
<comment type="activity regulation">
    <text evidence="2 3">Activated by cytosolic calcium, which is necessary for binding to membrane lipids. Activated by phosphorylation in response to mitogenic stimuli.</text>
</comment>
<comment type="pathway">
    <text evidence="3">Membrane lipid metabolism; glycerophospholipid metabolism.</text>
</comment>
<comment type="pathway">
    <text evidence="2">Lipid metabolism; arachidonate metabolism.</text>
</comment>
<comment type="pathway">
    <text evidence="2">Lipid metabolism; prostaglandin biosynthesis.</text>
</comment>
<comment type="pathway">
    <text evidence="2">Lipid metabolism; leukotriene B4 biosynthesis.</text>
</comment>
<comment type="subunit">
    <text evidence="2">Interacts with KAT5.</text>
</comment>
<comment type="subcellular location">
    <subcellularLocation>
        <location evidence="2">Cytoplasm</location>
    </subcellularLocation>
    <subcellularLocation>
        <location evidence="2">Golgi apparatus membrane</location>
    </subcellularLocation>
    <subcellularLocation>
        <location evidence="2">Nucleus envelope</location>
    </subcellularLocation>
    <text evidence="2">Translocates to intracellular membranes in a calcium-dependent way.</text>
</comment>
<comment type="domain">
    <text evidence="2">The N-terminal C2 domain associates with lipid membranes upon calcium binding. It modulates enzyme activity by presenting the active site to its substrate in response to elevations of cytosolic calcium. In the presence of phosphoinositides, regulates phospholipase A2 and lysophospholipase activities in a calcium-independent way.</text>
</comment>
<comment type="PTM">
    <text evidence="2">Phosphorylated at both Ser-505 and Ser-726 in response to mitogenic stimuli.</text>
</comment>
<organism>
    <name type="scientific">Oryctolagus cuniculus</name>
    <name type="common">Rabbit</name>
    <dbReference type="NCBI Taxonomy" id="9986"/>
    <lineage>
        <taxon>Eukaryota</taxon>
        <taxon>Metazoa</taxon>
        <taxon>Chordata</taxon>
        <taxon>Craniata</taxon>
        <taxon>Vertebrata</taxon>
        <taxon>Euteleostomi</taxon>
        <taxon>Mammalia</taxon>
        <taxon>Eutheria</taxon>
        <taxon>Euarchontoglires</taxon>
        <taxon>Glires</taxon>
        <taxon>Lagomorpha</taxon>
        <taxon>Leporidae</taxon>
        <taxon>Oryctolagus</taxon>
    </lineage>
</organism>
<dbReference type="EC" id="3.1.1.4" evidence="2"/>
<dbReference type="EC" id="3.1.1.5" evidence="2"/>
<dbReference type="EMBL" id="AF204923">
    <property type="protein sequence ID" value="AAF15299.1"/>
    <property type="molecule type" value="mRNA"/>
</dbReference>
<dbReference type="RefSeq" id="NP_001075541.1">
    <property type="nucleotide sequence ID" value="NM_001082072.1"/>
</dbReference>
<dbReference type="SMR" id="Q9TT38"/>
<dbReference type="FunCoup" id="Q9TT38">
    <property type="interactions" value="280"/>
</dbReference>
<dbReference type="STRING" id="9986.ENSOCUP00000012590"/>
<dbReference type="PaxDb" id="9986-ENSOCUP00000012590"/>
<dbReference type="GeneID" id="100008748"/>
<dbReference type="KEGG" id="ocu:100008748"/>
<dbReference type="CTD" id="5321"/>
<dbReference type="eggNOG" id="KOG1012">
    <property type="taxonomic scope" value="Eukaryota"/>
</dbReference>
<dbReference type="eggNOG" id="KOG1325">
    <property type="taxonomic scope" value="Eukaryota"/>
</dbReference>
<dbReference type="InParanoid" id="Q9TT38"/>
<dbReference type="OrthoDB" id="419768at2759"/>
<dbReference type="UniPathway" id="UPA00383"/>
<dbReference type="UniPathway" id="UPA00662"/>
<dbReference type="UniPathway" id="UPA00878"/>
<dbReference type="UniPathway" id="UPA00940"/>
<dbReference type="Proteomes" id="UP000001811">
    <property type="component" value="Unplaced"/>
</dbReference>
<dbReference type="GO" id="GO:0005737">
    <property type="term" value="C:cytoplasm"/>
    <property type="evidence" value="ECO:0000250"/>
    <property type="project" value="UniProtKB"/>
</dbReference>
<dbReference type="GO" id="GO:0005829">
    <property type="term" value="C:cytosol"/>
    <property type="evidence" value="ECO:0007669"/>
    <property type="project" value="TreeGrafter"/>
</dbReference>
<dbReference type="GO" id="GO:0005783">
    <property type="term" value="C:endoplasmic reticulum"/>
    <property type="evidence" value="ECO:0007669"/>
    <property type="project" value="TreeGrafter"/>
</dbReference>
<dbReference type="GO" id="GO:0000139">
    <property type="term" value="C:Golgi membrane"/>
    <property type="evidence" value="ECO:0000250"/>
    <property type="project" value="UniProtKB"/>
</dbReference>
<dbReference type="GO" id="GO:0005635">
    <property type="term" value="C:nuclear envelope"/>
    <property type="evidence" value="ECO:0000250"/>
    <property type="project" value="UniProtKB"/>
</dbReference>
<dbReference type="GO" id="GO:0005509">
    <property type="term" value="F:calcium ion binding"/>
    <property type="evidence" value="ECO:0000250"/>
    <property type="project" value="UniProtKB"/>
</dbReference>
<dbReference type="GO" id="GO:0047498">
    <property type="term" value="F:calcium-dependent phospholipase A2 activity"/>
    <property type="evidence" value="ECO:0000250"/>
    <property type="project" value="UniProtKB"/>
</dbReference>
<dbReference type="GO" id="GO:0005544">
    <property type="term" value="F:calcium-dependent phospholipid binding"/>
    <property type="evidence" value="ECO:0000250"/>
    <property type="project" value="UniProtKB"/>
</dbReference>
<dbReference type="GO" id="GO:0047499">
    <property type="term" value="F:calcium-independent phospholipase A2 activity"/>
    <property type="evidence" value="ECO:0000250"/>
    <property type="project" value="UniProtKB"/>
</dbReference>
<dbReference type="GO" id="GO:1902387">
    <property type="term" value="F:ceramide 1-phosphate binding"/>
    <property type="evidence" value="ECO:0000250"/>
    <property type="project" value="UniProtKB"/>
</dbReference>
<dbReference type="GO" id="GO:0004622">
    <property type="term" value="F:lysophospholipase activity"/>
    <property type="evidence" value="ECO:0000250"/>
    <property type="project" value="UniProtKB"/>
</dbReference>
<dbReference type="GO" id="GO:0008374">
    <property type="term" value="F:O-acyltransferase activity"/>
    <property type="evidence" value="ECO:0000250"/>
    <property type="project" value="UniProtKB"/>
</dbReference>
<dbReference type="GO" id="GO:0032266">
    <property type="term" value="F:phosphatidylinositol-3-phosphate binding"/>
    <property type="evidence" value="ECO:0000250"/>
    <property type="project" value="UniProtKB"/>
</dbReference>
<dbReference type="GO" id="GO:0070273">
    <property type="term" value="F:phosphatidylinositol-4-phosphate binding"/>
    <property type="evidence" value="ECO:0000250"/>
    <property type="project" value="UniProtKB"/>
</dbReference>
<dbReference type="GO" id="GO:0010314">
    <property type="term" value="F:phosphatidylinositol-5-phosphate binding"/>
    <property type="evidence" value="ECO:0000250"/>
    <property type="project" value="UniProtKB"/>
</dbReference>
<dbReference type="GO" id="GO:0019369">
    <property type="term" value="P:arachidonate metabolic process"/>
    <property type="evidence" value="ECO:0000250"/>
    <property type="project" value="UniProtKB"/>
</dbReference>
<dbReference type="GO" id="GO:0006071">
    <property type="term" value="P:glycerol metabolic process"/>
    <property type="evidence" value="ECO:0007669"/>
    <property type="project" value="UniProtKB-KW"/>
</dbReference>
<dbReference type="GO" id="GO:0019370">
    <property type="term" value="P:leukotriene biosynthetic process"/>
    <property type="evidence" value="ECO:0007669"/>
    <property type="project" value="UniProtKB-KW"/>
</dbReference>
<dbReference type="GO" id="GO:0006640">
    <property type="term" value="P:monoacylglycerol biosynthetic process"/>
    <property type="evidence" value="ECO:0000250"/>
    <property type="project" value="UniProtKB"/>
</dbReference>
<dbReference type="GO" id="GO:0034638">
    <property type="term" value="P:phosphatidylcholine catabolic process"/>
    <property type="evidence" value="ECO:0000250"/>
    <property type="project" value="UniProtKB"/>
</dbReference>
<dbReference type="GO" id="GO:0034478">
    <property type="term" value="P:phosphatidylglycerol catabolic process"/>
    <property type="evidence" value="ECO:0000250"/>
    <property type="project" value="UniProtKB"/>
</dbReference>
<dbReference type="GO" id="GO:0001516">
    <property type="term" value="P:prostaglandin biosynthetic process"/>
    <property type="evidence" value="ECO:0000250"/>
    <property type="project" value="UniProtKB"/>
</dbReference>
<dbReference type="CDD" id="cd04036">
    <property type="entry name" value="C2_cPLA2"/>
    <property type="match status" value="1"/>
</dbReference>
<dbReference type="CDD" id="cd07200">
    <property type="entry name" value="cPLA2_Grp-IVA"/>
    <property type="match status" value="1"/>
</dbReference>
<dbReference type="FunFam" id="2.60.40.150:FF:000030">
    <property type="entry name" value="Phospholipase A2"/>
    <property type="match status" value="1"/>
</dbReference>
<dbReference type="Gene3D" id="2.60.40.150">
    <property type="entry name" value="C2 domain"/>
    <property type="match status" value="1"/>
</dbReference>
<dbReference type="Gene3D" id="3.40.1090.10">
    <property type="entry name" value="Cytosolic phospholipase A2 catalytic domain"/>
    <property type="match status" value="1"/>
</dbReference>
<dbReference type="InterPro" id="IPR016035">
    <property type="entry name" value="Acyl_Trfase/lysoPLipase"/>
</dbReference>
<dbReference type="InterPro" id="IPR041847">
    <property type="entry name" value="C2_cPLA2"/>
</dbReference>
<dbReference type="InterPro" id="IPR000008">
    <property type="entry name" value="C2_dom"/>
</dbReference>
<dbReference type="InterPro" id="IPR035892">
    <property type="entry name" value="C2_domain_sf"/>
</dbReference>
<dbReference type="InterPro" id="IPR002642">
    <property type="entry name" value="LysoPLipase_cat_dom"/>
</dbReference>
<dbReference type="PANTHER" id="PTHR10728">
    <property type="entry name" value="CYTOSOLIC PHOSPHOLIPASE A2"/>
    <property type="match status" value="1"/>
</dbReference>
<dbReference type="PANTHER" id="PTHR10728:SF13">
    <property type="entry name" value="CYTOSOLIC PHOSPHOLIPASE A2"/>
    <property type="match status" value="1"/>
</dbReference>
<dbReference type="Pfam" id="PF00168">
    <property type="entry name" value="C2"/>
    <property type="match status" value="1"/>
</dbReference>
<dbReference type="Pfam" id="PF01735">
    <property type="entry name" value="PLA2_B"/>
    <property type="match status" value="1"/>
</dbReference>
<dbReference type="SMART" id="SM00239">
    <property type="entry name" value="C2"/>
    <property type="match status" value="1"/>
</dbReference>
<dbReference type="SMART" id="SM00022">
    <property type="entry name" value="PLAc"/>
    <property type="match status" value="1"/>
</dbReference>
<dbReference type="SUPFAM" id="SSF49562">
    <property type="entry name" value="C2 domain (Calcium/lipid-binding domain, CaLB)"/>
    <property type="match status" value="1"/>
</dbReference>
<dbReference type="SUPFAM" id="SSF52151">
    <property type="entry name" value="FabD/lysophospholipase-like"/>
    <property type="match status" value="1"/>
</dbReference>
<dbReference type="PROSITE" id="PS50004">
    <property type="entry name" value="C2"/>
    <property type="match status" value="1"/>
</dbReference>
<dbReference type="PROSITE" id="PS51210">
    <property type="entry name" value="PLA2C"/>
    <property type="match status" value="1"/>
</dbReference>